<name>MLTF_YERPA</name>
<dbReference type="EC" id="4.2.2.n1" evidence="1"/>
<dbReference type="EMBL" id="CP000308">
    <property type="protein sequence ID" value="ABG14326.1"/>
    <property type="status" value="ALT_INIT"/>
    <property type="molecule type" value="Genomic_DNA"/>
</dbReference>
<dbReference type="RefSeq" id="WP_002211562.1">
    <property type="nucleotide sequence ID" value="NZ_CP009906.1"/>
</dbReference>
<dbReference type="SMR" id="Q1C5E6"/>
<dbReference type="CAZy" id="GH23">
    <property type="family name" value="Glycoside Hydrolase Family 23"/>
</dbReference>
<dbReference type="GeneID" id="57975876"/>
<dbReference type="KEGG" id="ypa:YPA_2361"/>
<dbReference type="Proteomes" id="UP000001971">
    <property type="component" value="Chromosome"/>
</dbReference>
<dbReference type="GO" id="GO:0009279">
    <property type="term" value="C:cell outer membrane"/>
    <property type="evidence" value="ECO:0007669"/>
    <property type="project" value="UniProtKB-SubCell"/>
</dbReference>
<dbReference type="GO" id="GO:0008933">
    <property type="term" value="F:peptidoglycan lytic transglycosylase activity"/>
    <property type="evidence" value="ECO:0007669"/>
    <property type="project" value="UniProtKB-UniRule"/>
</dbReference>
<dbReference type="GO" id="GO:0016998">
    <property type="term" value="P:cell wall macromolecule catabolic process"/>
    <property type="evidence" value="ECO:0007669"/>
    <property type="project" value="UniProtKB-UniRule"/>
</dbReference>
<dbReference type="GO" id="GO:0071555">
    <property type="term" value="P:cell wall organization"/>
    <property type="evidence" value="ECO:0007669"/>
    <property type="project" value="UniProtKB-KW"/>
</dbReference>
<dbReference type="GO" id="GO:0009253">
    <property type="term" value="P:peptidoglycan catabolic process"/>
    <property type="evidence" value="ECO:0007669"/>
    <property type="project" value="TreeGrafter"/>
</dbReference>
<dbReference type="CDD" id="cd13403">
    <property type="entry name" value="MLTF-like"/>
    <property type="match status" value="1"/>
</dbReference>
<dbReference type="CDD" id="cd01009">
    <property type="entry name" value="PBP2_YfhD_N"/>
    <property type="match status" value="1"/>
</dbReference>
<dbReference type="FunFam" id="1.10.530.10:FF:000003">
    <property type="entry name" value="Membrane-bound lytic murein transglycosylase F"/>
    <property type="match status" value="1"/>
</dbReference>
<dbReference type="Gene3D" id="1.10.530.10">
    <property type="match status" value="1"/>
</dbReference>
<dbReference type="Gene3D" id="3.40.190.10">
    <property type="entry name" value="Periplasmic binding protein-like II"/>
    <property type="match status" value="2"/>
</dbReference>
<dbReference type="HAMAP" id="MF_02016">
    <property type="entry name" value="MltF"/>
    <property type="match status" value="1"/>
</dbReference>
<dbReference type="InterPro" id="IPR023346">
    <property type="entry name" value="Lysozyme-like_dom_sf"/>
</dbReference>
<dbReference type="InterPro" id="IPR023703">
    <property type="entry name" value="MltF"/>
</dbReference>
<dbReference type="InterPro" id="IPR001638">
    <property type="entry name" value="Solute-binding_3/MltF_N"/>
</dbReference>
<dbReference type="InterPro" id="IPR000189">
    <property type="entry name" value="Transglyc_AS"/>
</dbReference>
<dbReference type="InterPro" id="IPR008258">
    <property type="entry name" value="Transglycosylase_SLT_dom_1"/>
</dbReference>
<dbReference type="NCBIfam" id="NF008112">
    <property type="entry name" value="PRK10859.1"/>
    <property type="match status" value="1"/>
</dbReference>
<dbReference type="PANTHER" id="PTHR35936">
    <property type="entry name" value="MEMBRANE-BOUND LYTIC MUREIN TRANSGLYCOSYLASE F"/>
    <property type="match status" value="1"/>
</dbReference>
<dbReference type="PANTHER" id="PTHR35936:SF32">
    <property type="entry name" value="MEMBRANE-BOUND LYTIC MUREIN TRANSGLYCOSYLASE F"/>
    <property type="match status" value="1"/>
</dbReference>
<dbReference type="Pfam" id="PF00497">
    <property type="entry name" value="SBP_bac_3"/>
    <property type="match status" value="1"/>
</dbReference>
<dbReference type="Pfam" id="PF01464">
    <property type="entry name" value="SLT"/>
    <property type="match status" value="1"/>
</dbReference>
<dbReference type="SMART" id="SM00062">
    <property type="entry name" value="PBPb"/>
    <property type="match status" value="1"/>
</dbReference>
<dbReference type="SUPFAM" id="SSF53955">
    <property type="entry name" value="Lysozyme-like"/>
    <property type="match status" value="1"/>
</dbReference>
<dbReference type="SUPFAM" id="SSF53850">
    <property type="entry name" value="Periplasmic binding protein-like II"/>
    <property type="match status" value="1"/>
</dbReference>
<dbReference type="PROSITE" id="PS00922">
    <property type="entry name" value="TRANSGLYCOSYLASE"/>
    <property type="match status" value="1"/>
</dbReference>
<feature type="signal peptide" evidence="1">
    <location>
        <begin position="1"/>
        <end position="21"/>
    </location>
</feature>
<feature type="chain" id="PRO_0000353997" description="Membrane-bound lytic murein transglycosylase F">
    <location>
        <begin position="22"/>
        <end position="486"/>
    </location>
</feature>
<feature type="region of interest" description="Non-LT domain" evidence="1">
    <location>
        <begin position="22"/>
        <end position="268"/>
    </location>
</feature>
<feature type="region of interest" description="LT domain" evidence="1">
    <location>
        <begin position="269"/>
        <end position="486"/>
    </location>
</feature>
<feature type="active site" evidence="1">
    <location>
        <position position="313"/>
    </location>
</feature>
<accession>Q1C5E6</accession>
<gene>
    <name evidence="1" type="primary">mltF</name>
    <name type="ordered locus">YPA_2361</name>
</gene>
<sequence length="486" mass="54808">MTRIKLSYFTIGLVALLLALALWPNIPWRNGQEGQLDQIKARGELRVSTISSPLIYSTEKDTPSGFDYELAKRFADYLGVKLVIIPHHNIDDLFDALDNDDTDLLAAGLIYNRERLNRARTGPAYYSVSQQLVYRLGSPRPKSFSDLKGQVVVASGSAHMTTLKRLKQTKYPELNWSSSVDKSGKELLEQVAEGKLDYTLGDSATIALLQRIHPQLAVAFDVTDEEPVTWYFKQSDDDSLYAAMLDFYSEMVEDGSLARLEEKYLGHVGSFDYVDTKTFLSAIDNVLPSYQHLFEKHAGDIDWKLLAVIAYQESHWNPQATSPTGVRGLMMLTRATADGLGVKDRVDPEESIRGGAIYLQRLMKKLPETIPEDERIWFALAAYNLGYGHMLDARRLTKNQNGNPDSWVDVKMRLPMLSQKRYYPSTTYGYARGHEAYNYVENIRRYQVSLVGYLQEKEKKAAQHAAIEAELGKSNPVVGPGWSIGD</sequence>
<keyword id="KW-0998">Cell outer membrane</keyword>
<keyword id="KW-0961">Cell wall biogenesis/degradation</keyword>
<keyword id="KW-0456">Lyase</keyword>
<keyword id="KW-0472">Membrane</keyword>
<keyword id="KW-0732">Signal</keyword>
<comment type="function">
    <text evidence="1">Murein-degrading enzyme that degrades murein glycan strands and insoluble, high-molecular weight murein sacculi, with the concomitant formation of a 1,6-anhydromuramoyl product. Lytic transglycosylases (LTs) play an integral role in the metabolism of the peptidoglycan (PG) sacculus. Their lytic action creates space within the PG sacculus to allow for its expansion as well as for the insertion of various structures such as secretion systems and flagella.</text>
</comment>
<comment type="catalytic activity">
    <reaction evidence="1">
        <text>Exolytic cleavage of the (1-&gt;4)-beta-glycosidic linkage between N-acetylmuramic acid (MurNAc) and N-acetylglucosamine (GlcNAc) residues in peptidoglycan, from either the reducing or the non-reducing ends of the peptidoglycan chains, with concomitant formation of a 1,6-anhydrobond in the MurNAc residue.</text>
        <dbReference type="EC" id="4.2.2.n1"/>
    </reaction>
</comment>
<comment type="subcellular location">
    <subcellularLocation>
        <location>Cell outer membrane</location>
        <topology>Peripheral membrane protein</topology>
    </subcellularLocation>
    <text evidence="1">Attached to the inner leaflet of the outer membrane.</text>
</comment>
<comment type="domain">
    <text evidence="1">The N-terminal domain does not have lytic activity and probably modulates enzymatic activity. The C-terminal domain is the catalytic active domain.</text>
</comment>
<comment type="similarity">
    <text evidence="1">In the N-terminal section; belongs to the bacterial solute-binding protein 3 family.</text>
</comment>
<comment type="similarity">
    <text evidence="1">In the C-terminal section; belongs to the transglycosylase Slt family.</text>
</comment>
<comment type="sequence caution" evidence="2">
    <conflict type="erroneous initiation">
        <sequence resource="EMBL-CDS" id="ABG14326"/>
    </conflict>
</comment>
<proteinExistence type="inferred from homology"/>
<organism>
    <name type="scientific">Yersinia pestis bv. Antiqua (strain Antiqua)</name>
    <dbReference type="NCBI Taxonomy" id="360102"/>
    <lineage>
        <taxon>Bacteria</taxon>
        <taxon>Pseudomonadati</taxon>
        <taxon>Pseudomonadota</taxon>
        <taxon>Gammaproteobacteria</taxon>
        <taxon>Enterobacterales</taxon>
        <taxon>Yersiniaceae</taxon>
        <taxon>Yersinia</taxon>
    </lineage>
</organism>
<reference key="1">
    <citation type="journal article" date="2006" name="J. Bacteriol.">
        <title>Complete genome sequence of Yersinia pestis strains Antiqua and Nepal516: evidence of gene reduction in an emerging pathogen.</title>
        <authorList>
            <person name="Chain P.S.G."/>
            <person name="Hu P."/>
            <person name="Malfatti S.A."/>
            <person name="Radnedge L."/>
            <person name="Larimer F."/>
            <person name="Vergez L.M."/>
            <person name="Worsham P."/>
            <person name="Chu M.C."/>
            <person name="Andersen G.L."/>
        </authorList>
    </citation>
    <scope>NUCLEOTIDE SEQUENCE [LARGE SCALE GENOMIC DNA]</scope>
    <source>
        <strain>Antiqua</strain>
    </source>
</reference>
<protein>
    <recommendedName>
        <fullName evidence="1">Membrane-bound lytic murein transglycosylase F</fullName>
        <ecNumber evidence="1">4.2.2.n1</ecNumber>
    </recommendedName>
    <alternativeName>
        <fullName evidence="1">Murein lyase F</fullName>
    </alternativeName>
</protein>
<evidence type="ECO:0000255" key="1">
    <source>
        <dbReference type="HAMAP-Rule" id="MF_02016"/>
    </source>
</evidence>
<evidence type="ECO:0000305" key="2"/>